<keyword id="KW-0027">Amidation</keyword>
<keyword id="KW-0878">Amphibian defense peptide</keyword>
<keyword id="KW-0044">Antibiotic</keyword>
<keyword id="KW-0929">Antimicrobial</keyword>
<keyword id="KW-0204">Cytolysis</keyword>
<keyword id="KW-0903">Direct protein sequencing</keyword>
<keyword id="KW-0295">Fungicide</keyword>
<keyword id="KW-0354">Hemolysis</keyword>
<keyword id="KW-0964">Secreted</keyword>
<protein>
    <recommendedName>
        <fullName evidence="2">Temporin-1SPb</fullName>
    </recommendedName>
</protein>
<comment type="function">
    <text evidence="1 3">Antibacterial peptide with activity against Gram-positive bacteria (MIC=6 uM against S.aureus) (PubMed:15556063). May also show activity against Gram-negative bacteria and fungi (Probable). Shows hemolytic activity on human erythrocytes (HC(50)=60 uM) (PubMed:15556063).</text>
</comment>
<comment type="subcellular location">
    <subcellularLocation>
        <location evidence="1">Secreted</location>
    </subcellularLocation>
</comment>
<comment type="tissue specificity">
    <text evidence="4">Expressed by the skin glands.</text>
</comment>
<comment type="developmental stage">
    <text evidence="4">Is equally expressed in juvenile and adult (male and female) frogs.</text>
</comment>
<comment type="mass spectrometry"/>
<comment type="similarity">
    <text evidence="3">Belongs to the frog skin active peptide (FSAP) family. Temporin subfamily.</text>
</comment>
<comment type="online information" name="The antimicrobial peptide database">
    <link uri="https://wangapd3.com/database/query_output.php?ID=00598"/>
</comment>
<sequence>FLSAITSLLGKLL</sequence>
<evidence type="ECO:0000269" key="1">
    <source>
    </source>
</evidence>
<evidence type="ECO:0000303" key="2">
    <source>
    </source>
</evidence>
<evidence type="ECO:0000305" key="3"/>
<evidence type="ECO:0000305" key="4">
    <source>
    </source>
</evidence>
<feature type="peptide" id="PRO_0000449483" description="Temporin-1SPb" evidence="1">
    <location>
        <begin position="1"/>
        <end position="13"/>
    </location>
</feature>
<feature type="modified residue" description="Leucine amide" evidence="1">
    <location>
        <position position="13"/>
    </location>
</feature>
<name>TP1B_LITST</name>
<dbReference type="GO" id="GO:0005576">
    <property type="term" value="C:extracellular region"/>
    <property type="evidence" value="ECO:0007669"/>
    <property type="project" value="UniProtKB-SubCell"/>
</dbReference>
<dbReference type="GO" id="GO:0042742">
    <property type="term" value="P:defense response to bacterium"/>
    <property type="evidence" value="ECO:0007669"/>
    <property type="project" value="UniProtKB-KW"/>
</dbReference>
<dbReference type="GO" id="GO:0050832">
    <property type="term" value="P:defense response to fungus"/>
    <property type="evidence" value="ECO:0007669"/>
    <property type="project" value="UniProtKB-KW"/>
</dbReference>
<dbReference type="GO" id="GO:0031640">
    <property type="term" value="P:killing of cells of another organism"/>
    <property type="evidence" value="ECO:0007669"/>
    <property type="project" value="UniProtKB-KW"/>
</dbReference>
<reference key="1">
    <citation type="journal article" date="2004" name="Comp. Biochem. Physiol.">
        <title>Purification and characterization of antimicrobial peptides from the skin secretions of the mink frog (Rana septentrionalis).</title>
        <authorList>
            <person name="Bevier C.R."/>
            <person name="Sonnevend A."/>
            <person name="Kolodziejek J."/>
            <person name="Nowotny N."/>
            <person name="Nielsen P.F."/>
            <person name="Conlon J.M."/>
        </authorList>
    </citation>
    <scope>PROTEIN SEQUENCE</scope>
    <scope>AMIDATION AT LEU-13</scope>
    <scope>SUBCELLULAR LOCATION</scope>
    <scope>MASS SPECTROMETRY</scope>
    <scope>DEVELOPMENTAL STAGE</scope>
    <source>
        <tissue>Skin secretion</tissue>
    </source>
</reference>
<organism>
    <name type="scientific">Lithobates septentrionalis</name>
    <name type="common">Mink frog</name>
    <name type="synonym">Rana septentrionalis</name>
    <dbReference type="NCBI Taxonomy" id="190274"/>
    <lineage>
        <taxon>Eukaryota</taxon>
        <taxon>Metazoa</taxon>
        <taxon>Chordata</taxon>
        <taxon>Craniata</taxon>
        <taxon>Vertebrata</taxon>
        <taxon>Euteleostomi</taxon>
        <taxon>Amphibia</taxon>
        <taxon>Batrachia</taxon>
        <taxon>Anura</taxon>
        <taxon>Neobatrachia</taxon>
        <taxon>Ranoidea</taxon>
        <taxon>Ranidae</taxon>
        <taxon>Lithobates</taxon>
    </lineage>
</organism>
<accession>P0DQK6</accession>
<proteinExistence type="evidence at protein level"/>